<comment type="function">
    <text evidence="1">Serine/threonine-protein kinase that acts downstream of ERK (MAPK1/ERK2 and MAPK3/ERK1) signaling and mediates mitogenic and stress-induced activation of transcription factors, regulates translation, and mediates cellular proliferation, survival, and differentiation. May function as tumor suppressor in epithelial ovarian cancer cells (By similarity).</text>
</comment>
<comment type="catalytic activity">
    <reaction>
        <text>L-seryl-[protein] + ATP = O-phospho-L-seryl-[protein] + ADP + H(+)</text>
        <dbReference type="Rhea" id="RHEA:17989"/>
        <dbReference type="Rhea" id="RHEA-COMP:9863"/>
        <dbReference type="Rhea" id="RHEA-COMP:11604"/>
        <dbReference type="ChEBI" id="CHEBI:15378"/>
        <dbReference type="ChEBI" id="CHEBI:29999"/>
        <dbReference type="ChEBI" id="CHEBI:30616"/>
        <dbReference type="ChEBI" id="CHEBI:83421"/>
        <dbReference type="ChEBI" id="CHEBI:456216"/>
        <dbReference type="EC" id="2.7.11.1"/>
    </reaction>
</comment>
<comment type="catalytic activity">
    <reaction>
        <text>L-threonyl-[protein] + ATP = O-phospho-L-threonyl-[protein] + ADP + H(+)</text>
        <dbReference type="Rhea" id="RHEA:46608"/>
        <dbReference type="Rhea" id="RHEA-COMP:11060"/>
        <dbReference type="Rhea" id="RHEA-COMP:11605"/>
        <dbReference type="ChEBI" id="CHEBI:15378"/>
        <dbReference type="ChEBI" id="CHEBI:30013"/>
        <dbReference type="ChEBI" id="CHEBI:30616"/>
        <dbReference type="ChEBI" id="CHEBI:61977"/>
        <dbReference type="ChEBI" id="CHEBI:456216"/>
        <dbReference type="EC" id="2.7.11.1"/>
    </reaction>
</comment>
<comment type="cofactor">
    <cofactor evidence="1">
        <name>Mg(2+)</name>
        <dbReference type="ChEBI" id="CHEBI:18420"/>
    </cofactor>
</comment>
<comment type="activity regulation">
    <text>Upon extracellular signal or mitogen stimulation, phosphorylated at Thr-570 in the C-terminal kinase domain (CTKD) by MAPK1/ERK2 and MAPK3/ERK1. The activated CTKD then autophosphorylates Ser-377, allowing binding of PDPK1, which in turn phosphorylates Ser-218 in the N-terminal kinase domain (NTDK) leading to the full activation of the protein and subsequent phosphorylation of the substrates by the NTKD.</text>
</comment>
<comment type="subunit">
    <text evidence="1 5">Forms a complex with either MAPK1/ERK2 or MAPK3/ERK1 in quiescent cells. Transiently dissociates following mitogenic stimulation (By similarity). Interacts with FBXO5; cooperate to induce the metaphase arrest of early blastomeres; increases and stabilizes interaction of FBXO5 with CDC20 (PubMed:15526037).</text>
</comment>
<comment type="subcellular location">
    <subcellularLocation>
        <location evidence="1">Nucleus</location>
    </subcellularLocation>
    <subcellularLocation>
        <location evidence="1">Cytoplasm</location>
    </subcellularLocation>
</comment>
<comment type="PTM">
    <text evidence="1">Activated by phosphorylation at Ser-218 by PDPK1. Autophosphorylated on Ser-377, as part of the activation process. May be phosphorylated at Thr-356 and Ser-360 by MAPK1/ERK2 and MAPK3/ERK1 (By similarity).</text>
</comment>
<comment type="PTM">
    <text evidence="1">N-terminal myristoylation results in an activated kinase in the absence of added growth factors.</text>
</comment>
<comment type="similarity">
    <text evidence="6">Belongs to the protein kinase superfamily. AGC Ser/Thr protein kinase family. S6 kinase subfamily.</text>
</comment>
<keyword id="KW-0067">ATP-binding</keyword>
<keyword id="KW-0963">Cytoplasm</keyword>
<keyword id="KW-0418">Kinase</keyword>
<keyword id="KW-0547">Nucleotide-binding</keyword>
<keyword id="KW-0539">Nucleus</keyword>
<keyword id="KW-0597">Phosphoprotein</keyword>
<keyword id="KW-1185">Reference proteome</keyword>
<keyword id="KW-0677">Repeat</keyword>
<keyword id="KW-0723">Serine/threonine-protein kinase</keyword>
<keyword id="KW-0808">Transferase</keyword>
<keyword id="KW-0043">Tumor suppressor</keyword>
<reference key="1">
    <citation type="journal article" date="1999" name="Mamm. Genome">
        <title>The mouse Rsk3 gene maps to the Leh66 elements carrying the T-complex responder Tcr.</title>
        <authorList>
            <person name="Kispert A."/>
            <person name="Stoeger R.J."/>
            <person name="Caparros M."/>
            <person name="Herrmann B.G."/>
        </authorList>
    </citation>
    <scope>NUCLEOTIDE SEQUENCE [MRNA]</scope>
    <source>
        <tissue>Brain</tissue>
    </source>
</reference>
<reference key="2">
    <citation type="journal article" date="2005" name="Science">
        <title>The transcriptional landscape of the mammalian genome.</title>
        <authorList>
            <person name="Carninci P."/>
            <person name="Kasukawa T."/>
            <person name="Katayama S."/>
            <person name="Gough J."/>
            <person name="Frith M.C."/>
            <person name="Maeda N."/>
            <person name="Oyama R."/>
            <person name="Ravasi T."/>
            <person name="Lenhard B."/>
            <person name="Wells C."/>
            <person name="Kodzius R."/>
            <person name="Shimokawa K."/>
            <person name="Bajic V.B."/>
            <person name="Brenner S.E."/>
            <person name="Batalov S."/>
            <person name="Forrest A.R."/>
            <person name="Zavolan M."/>
            <person name="Davis M.J."/>
            <person name="Wilming L.G."/>
            <person name="Aidinis V."/>
            <person name="Allen J.E."/>
            <person name="Ambesi-Impiombato A."/>
            <person name="Apweiler R."/>
            <person name="Aturaliya R.N."/>
            <person name="Bailey T.L."/>
            <person name="Bansal M."/>
            <person name="Baxter L."/>
            <person name="Beisel K.W."/>
            <person name="Bersano T."/>
            <person name="Bono H."/>
            <person name="Chalk A.M."/>
            <person name="Chiu K.P."/>
            <person name="Choudhary V."/>
            <person name="Christoffels A."/>
            <person name="Clutterbuck D.R."/>
            <person name="Crowe M.L."/>
            <person name="Dalla E."/>
            <person name="Dalrymple B.P."/>
            <person name="de Bono B."/>
            <person name="Della Gatta G."/>
            <person name="di Bernardo D."/>
            <person name="Down T."/>
            <person name="Engstrom P."/>
            <person name="Fagiolini M."/>
            <person name="Faulkner G."/>
            <person name="Fletcher C.F."/>
            <person name="Fukushima T."/>
            <person name="Furuno M."/>
            <person name="Futaki S."/>
            <person name="Gariboldi M."/>
            <person name="Georgii-Hemming P."/>
            <person name="Gingeras T.R."/>
            <person name="Gojobori T."/>
            <person name="Green R.E."/>
            <person name="Gustincich S."/>
            <person name="Harbers M."/>
            <person name="Hayashi Y."/>
            <person name="Hensch T.K."/>
            <person name="Hirokawa N."/>
            <person name="Hill D."/>
            <person name="Huminiecki L."/>
            <person name="Iacono M."/>
            <person name="Ikeo K."/>
            <person name="Iwama A."/>
            <person name="Ishikawa T."/>
            <person name="Jakt M."/>
            <person name="Kanapin A."/>
            <person name="Katoh M."/>
            <person name="Kawasawa Y."/>
            <person name="Kelso J."/>
            <person name="Kitamura H."/>
            <person name="Kitano H."/>
            <person name="Kollias G."/>
            <person name="Krishnan S.P."/>
            <person name="Kruger A."/>
            <person name="Kummerfeld S.K."/>
            <person name="Kurochkin I.V."/>
            <person name="Lareau L.F."/>
            <person name="Lazarevic D."/>
            <person name="Lipovich L."/>
            <person name="Liu J."/>
            <person name="Liuni S."/>
            <person name="McWilliam S."/>
            <person name="Madan Babu M."/>
            <person name="Madera M."/>
            <person name="Marchionni L."/>
            <person name="Matsuda H."/>
            <person name="Matsuzawa S."/>
            <person name="Miki H."/>
            <person name="Mignone F."/>
            <person name="Miyake S."/>
            <person name="Morris K."/>
            <person name="Mottagui-Tabar S."/>
            <person name="Mulder N."/>
            <person name="Nakano N."/>
            <person name="Nakauchi H."/>
            <person name="Ng P."/>
            <person name="Nilsson R."/>
            <person name="Nishiguchi S."/>
            <person name="Nishikawa S."/>
            <person name="Nori F."/>
            <person name="Ohara O."/>
            <person name="Okazaki Y."/>
            <person name="Orlando V."/>
            <person name="Pang K.C."/>
            <person name="Pavan W.J."/>
            <person name="Pavesi G."/>
            <person name="Pesole G."/>
            <person name="Petrovsky N."/>
            <person name="Piazza S."/>
            <person name="Reed J."/>
            <person name="Reid J.F."/>
            <person name="Ring B.Z."/>
            <person name="Ringwald M."/>
            <person name="Rost B."/>
            <person name="Ruan Y."/>
            <person name="Salzberg S.L."/>
            <person name="Sandelin A."/>
            <person name="Schneider C."/>
            <person name="Schoenbach C."/>
            <person name="Sekiguchi K."/>
            <person name="Semple C.A."/>
            <person name="Seno S."/>
            <person name="Sessa L."/>
            <person name="Sheng Y."/>
            <person name="Shibata Y."/>
            <person name="Shimada H."/>
            <person name="Shimada K."/>
            <person name="Silva D."/>
            <person name="Sinclair B."/>
            <person name="Sperling S."/>
            <person name="Stupka E."/>
            <person name="Sugiura K."/>
            <person name="Sultana R."/>
            <person name="Takenaka Y."/>
            <person name="Taki K."/>
            <person name="Tammoja K."/>
            <person name="Tan S.L."/>
            <person name="Tang S."/>
            <person name="Taylor M.S."/>
            <person name="Tegner J."/>
            <person name="Teichmann S.A."/>
            <person name="Ueda H.R."/>
            <person name="van Nimwegen E."/>
            <person name="Verardo R."/>
            <person name="Wei C.L."/>
            <person name="Yagi K."/>
            <person name="Yamanishi H."/>
            <person name="Zabarovsky E."/>
            <person name="Zhu S."/>
            <person name="Zimmer A."/>
            <person name="Hide W."/>
            <person name="Bult C."/>
            <person name="Grimmond S.M."/>
            <person name="Teasdale R.D."/>
            <person name="Liu E.T."/>
            <person name="Brusic V."/>
            <person name="Quackenbush J."/>
            <person name="Wahlestedt C."/>
            <person name="Mattick J.S."/>
            <person name="Hume D.A."/>
            <person name="Kai C."/>
            <person name="Sasaki D."/>
            <person name="Tomaru Y."/>
            <person name="Fukuda S."/>
            <person name="Kanamori-Katayama M."/>
            <person name="Suzuki M."/>
            <person name="Aoki J."/>
            <person name="Arakawa T."/>
            <person name="Iida J."/>
            <person name="Imamura K."/>
            <person name="Itoh M."/>
            <person name="Kato T."/>
            <person name="Kawaji H."/>
            <person name="Kawagashira N."/>
            <person name="Kawashima T."/>
            <person name="Kojima M."/>
            <person name="Kondo S."/>
            <person name="Konno H."/>
            <person name="Nakano K."/>
            <person name="Ninomiya N."/>
            <person name="Nishio T."/>
            <person name="Okada M."/>
            <person name="Plessy C."/>
            <person name="Shibata K."/>
            <person name="Shiraki T."/>
            <person name="Suzuki S."/>
            <person name="Tagami M."/>
            <person name="Waki K."/>
            <person name="Watahiki A."/>
            <person name="Okamura-Oho Y."/>
            <person name="Suzuki H."/>
            <person name="Kawai J."/>
            <person name="Hayashizaki Y."/>
        </authorList>
    </citation>
    <scope>NUCLEOTIDE SEQUENCE [LARGE SCALE MRNA]</scope>
    <source>
        <strain>C57BL/6J</strain>
        <tissue>Ovary</tissue>
        <tissue>Uterus</tissue>
    </source>
</reference>
<reference key="3">
    <citation type="journal article" date="2004" name="Genome Res.">
        <title>The status, quality, and expansion of the NIH full-length cDNA project: the Mammalian Gene Collection (MGC).</title>
        <authorList>
            <consortium name="The MGC Project Team"/>
        </authorList>
    </citation>
    <scope>NUCLEOTIDE SEQUENCE [LARGE SCALE MRNA]</scope>
    <source>
        <strain>C57BL/6J</strain>
        <tissue>Brain</tissue>
        <tissue>Retina</tissue>
    </source>
</reference>
<reference key="4">
    <citation type="journal article" date="1992" name="Oncogene">
        <title>An Eph-related receptor protein tyrosine kinase gene segmentally expressed in the developing mouse hindbrain.</title>
        <authorList>
            <person name="Gilardi-Hebenstreit P."/>
            <person name="Nieto M.A."/>
            <person name="Frain M."/>
            <person name="Mattei M.-G."/>
            <person name="Chestier A."/>
            <person name="Wilkinson D.G."/>
            <person name="Charnay P."/>
        </authorList>
    </citation>
    <scope>NUCLEOTIDE SEQUENCE [MRNA] OF 534-592</scope>
    <source>
        <strain>C57BL/6J</strain>
        <tissue>Embryonic brain</tissue>
    </source>
</reference>
<reference key="5">
    <citation type="journal article" date="2004" name="EMBO J.">
        <title>Functional interaction between p90Rsk2 and Emi1 contributes to the metaphase arrest of mouse oocytes.</title>
        <authorList>
            <person name="Paronetto M.P."/>
            <person name="Giorda E."/>
            <person name="Carsetti R."/>
            <person name="Rossi P."/>
            <person name="Geremia R."/>
            <person name="Sette C."/>
        </authorList>
    </citation>
    <scope>INTERACTION WITH FBXO5</scope>
</reference>
<reference key="6">
    <citation type="journal article" date="2004" name="Mol. Cell. Proteomics">
        <title>Phosphoproteomic analysis of the developing mouse brain.</title>
        <authorList>
            <person name="Ballif B.A."/>
            <person name="Villen J."/>
            <person name="Beausoleil S.A."/>
            <person name="Schwartz D."/>
            <person name="Gygi S.P."/>
        </authorList>
    </citation>
    <scope>PHOSPHORYLATION [LARGE SCALE ANALYSIS] AT SER-377</scope>
    <scope>IDENTIFICATION BY MASS SPECTROMETRY [LARGE SCALE ANALYSIS]</scope>
    <source>
        <tissue>Embryonic brain</tissue>
    </source>
</reference>
<reference key="7">
    <citation type="journal article" date="2010" name="Cell">
        <title>A tissue-specific atlas of mouse protein phosphorylation and expression.</title>
        <authorList>
            <person name="Huttlin E.L."/>
            <person name="Jedrychowski M.P."/>
            <person name="Elias J.E."/>
            <person name="Goswami T."/>
            <person name="Rad R."/>
            <person name="Beausoleil S.A."/>
            <person name="Villen J."/>
            <person name="Haas W."/>
            <person name="Sowa M.E."/>
            <person name="Gygi S.P."/>
        </authorList>
    </citation>
    <scope>PHOSPHORYLATION [LARGE SCALE ANALYSIS] AT SER-377</scope>
    <scope>IDENTIFICATION BY MASS SPECTROMETRY [LARGE SCALE ANALYSIS]</scope>
    <source>
        <tissue>Brain</tissue>
        <tissue>Kidney</tissue>
        <tissue>Lung</tissue>
    </source>
</reference>
<accession>Q9WUT3</accession>
<accession>Q9D2C0</accession>
<protein>
    <recommendedName>
        <fullName>Ribosomal protein S6 kinase alpha-2</fullName>
        <shortName>S6K-alpha-2</shortName>
        <ecNumber>2.7.11.1</ecNumber>
    </recommendedName>
    <alternativeName>
        <fullName>90 kDa ribosomal protein S6 kinase 2</fullName>
        <shortName>p90-RSK 2</shortName>
        <shortName>p90RSK2</shortName>
    </alternativeName>
    <alternativeName>
        <fullName>MAP kinase-activated protein kinase 1c</fullName>
        <shortName>MAPK-activated protein kinase 1c</shortName>
        <shortName>MAPKAP kinase 1c</shortName>
        <shortName>MAPKAPK-1c</shortName>
    </alternativeName>
    <alternativeName>
        <fullName>Protein-tyrosine kinase Mpk-9</fullName>
    </alternativeName>
    <alternativeName>
        <fullName>Ribosomal S6 kinase 3</fullName>
        <shortName>RSK-3</shortName>
    </alternativeName>
    <alternativeName>
        <fullName>pp90RSK3</fullName>
    </alternativeName>
</protein>
<sequence>MELSMKKFTVRRFFSVYLRKKSRSKSSSLSRLEEEGIVKEIDISNHVKEGFEKADPSQFELLKVLGQGSYGKVFLVRKVTGSDAGQLYAMKVLKKATLKVRDRVRSKMERDILAEVNHPFIVKLHYAFQTEGKLYLILDFLRGGDLFTRLSKEVMFTEEDVKFYLAELALALDHLHGLGIIYRDLKPENILLDEEGHIKITDFGLSKEATDHDKRAYSFCGTIEYMAPEVVNRRGHTQSADWWSFGVLMFEMLTGSLPFQGKDRKETMALILKAKLGMPQFLSAEAQSLLRALFKRNPCNRLGAGVDGVEEIKRHPFFVTIDWNKLYRKEIKPPFKPAVGRPEDTFHFDPEFTARTPTDSPGVPPSANAHHLFRGFSFVASSLVQEPSQQDVPKAPIHPIVQQLHGNNIHFTDGYEIKEDIGVGSYSVCKRCVHKATDAEYAVKIIDKSKRDPSEEIEILLRYGQHPNIITLKDVYDDGKYVYLVMELMRGGELLDRILRQRCFSEREASDVLYTIARTMDYLHSQGVVHRDLKPSNILYMDESGNPESIRICDFGFAKQLRAENGLLMTPCYTANFVAPEVLKRQGYDAACDVWSLGILLYTMLAGFTPFANGPDDTPEEILARIGSGKYALSGGNWDSISDAAKDVVSKMLHVDPQQRLTAVQVLKHPWIVNREYLSQNQLSRQDVHLVKGAMAATYFALNRTPQAPRLEPVLSSSLAQRRGMKRLTSTRL</sequence>
<organism>
    <name type="scientific">Mus musculus</name>
    <name type="common">Mouse</name>
    <dbReference type="NCBI Taxonomy" id="10090"/>
    <lineage>
        <taxon>Eukaryota</taxon>
        <taxon>Metazoa</taxon>
        <taxon>Chordata</taxon>
        <taxon>Craniata</taxon>
        <taxon>Vertebrata</taxon>
        <taxon>Euteleostomi</taxon>
        <taxon>Mammalia</taxon>
        <taxon>Eutheria</taxon>
        <taxon>Euarchontoglires</taxon>
        <taxon>Glires</taxon>
        <taxon>Rodentia</taxon>
        <taxon>Myomorpha</taxon>
        <taxon>Muroidea</taxon>
        <taxon>Muridae</taxon>
        <taxon>Murinae</taxon>
        <taxon>Mus</taxon>
        <taxon>Mus</taxon>
    </lineage>
</organism>
<name>KS6A2_MOUSE</name>
<dbReference type="EC" id="2.7.11.1"/>
<dbReference type="EMBL" id="AJ131021">
    <property type="protein sequence ID" value="CAB44492.1"/>
    <property type="molecule type" value="mRNA"/>
</dbReference>
<dbReference type="EMBL" id="AK019881">
    <property type="protein sequence ID" value="BAB31901.1"/>
    <property type="molecule type" value="mRNA"/>
</dbReference>
<dbReference type="EMBL" id="BC043064">
    <property type="protein sequence ID" value="AAH43064.1"/>
    <property type="molecule type" value="mRNA"/>
</dbReference>
<dbReference type="EMBL" id="BC051079">
    <property type="protein sequence ID" value="AAH51079.1"/>
    <property type="molecule type" value="mRNA"/>
</dbReference>
<dbReference type="EMBL" id="BC056946">
    <property type="protein sequence ID" value="AAH56946.1"/>
    <property type="molecule type" value="mRNA"/>
</dbReference>
<dbReference type="EMBL" id="X57237">
    <property type="protein sequence ID" value="CAA40513.1"/>
    <property type="molecule type" value="mRNA"/>
</dbReference>
<dbReference type="CCDS" id="CCDS28376.1"/>
<dbReference type="RefSeq" id="NP_035429.1">
    <property type="nucleotide sequence ID" value="NM_011299.5"/>
</dbReference>
<dbReference type="SMR" id="Q9WUT3"/>
<dbReference type="BioGRID" id="203015">
    <property type="interactions" value="11"/>
</dbReference>
<dbReference type="FunCoup" id="Q9WUT3">
    <property type="interactions" value="2201"/>
</dbReference>
<dbReference type="IntAct" id="Q9WUT3">
    <property type="interactions" value="5"/>
</dbReference>
<dbReference type="MINT" id="Q9WUT3"/>
<dbReference type="STRING" id="10090.ENSMUSP00000024575"/>
<dbReference type="ChEMBL" id="CHEMBL3351220"/>
<dbReference type="iPTMnet" id="Q9WUT3"/>
<dbReference type="PhosphoSitePlus" id="Q9WUT3"/>
<dbReference type="jPOST" id="Q9WUT3"/>
<dbReference type="PaxDb" id="10090-ENSMUSP00000024575"/>
<dbReference type="ProteomicsDB" id="264875"/>
<dbReference type="Antibodypedia" id="33522">
    <property type="antibodies" value="563 antibodies from 42 providers"/>
</dbReference>
<dbReference type="DNASU" id="20112"/>
<dbReference type="Ensembl" id="ENSMUST00000024575.8">
    <property type="protein sequence ID" value="ENSMUSP00000024575.7"/>
    <property type="gene ID" value="ENSMUSG00000023809.12"/>
</dbReference>
<dbReference type="GeneID" id="20112"/>
<dbReference type="KEGG" id="mmu:20112"/>
<dbReference type="UCSC" id="uc008aih.2">
    <property type="organism name" value="mouse"/>
</dbReference>
<dbReference type="AGR" id="MGI:1342290"/>
<dbReference type="CTD" id="6196"/>
<dbReference type="MGI" id="MGI:1342290">
    <property type="gene designation" value="Rps6ka2"/>
</dbReference>
<dbReference type="VEuPathDB" id="HostDB:ENSMUSG00000023809"/>
<dbReference type="eggNOG" id="KOG0603">
    <property type="taxonomic scope" value="Eukaryota"/>
</dbReference>
<dbReference type="GeneTree" id="ENSGT00940000159956"/>
<dbReference type="HOGENOM" id="CLU_000288_58_3_1"/>
<dbReference type="InParanoid" id="Q9WUT3"/>
<dbReference type="OMA" id="GAMKATY"/>
<dbReference type="OrthoDB" id="63267at2759"/>
<dbReference type="PhylomeDB" id="Q9WUT3"/>
<dbReference type="TreeFam" id="TF313438"/>
<dbReference type="BRENDA" id="2.7.11.1">
    <property type="organism ID" value="3474"/>
</dbReference>
<dbReference type="Reactome" id="R-MMU-198753">
    <property type="pathway name" value="ERK/MAPK targets"/>
</dbReference>
<dbReference type="Reactome" id="R-MMU-199920">
    <property type="pathway name" value="CREB phosphorylation"/>
</dbReference>
<dbReference type="Reactome" id="R-MMU-2559582">
    <property type="pathway name" value="Senescence-Associated Secretory Phenotype (SASP)"/>
</dbReference>
<dbReference type="Reactome" id="R-MMU-442742">
    <property type="pathway name" value="CREB1 phosphorylation through NMDA receptor-mediated activation of RAS signaling"/>
</dbReference>
<dbReference type="Reactome" id="R-MMU-444257">
    <property type="pathway name" value="RSK activation"/>
</dbReference>
<dbReference type="Reactome" id="R-MMU-881907">
    <property type="pathway name" value="Gastrin-CREB signalling pathway via PKC and MAPK"/>
</dbReference>
<dbReference type="BioGRID-ORCS" id="20112">
    <property type="hits" value="2 hits in 80 CRISPR screens"/>
</dbReference>
<dbReference type="PRO" id="PR:Q9WUT3"/>
<dbReference type="Proteomes" id="UP000000589">
    <property type="component" value="Chromosome 17"/>
</dbReference>
<dbReference type="RNAct" id="Q9WUT3">
    <property type="molecule type" value="protein"/>
</dbReference>
<dbReference type="Bgee" id="ENSMUSG00000023809">
    <property type="expression patterns" value="Expressed in granulocyte and 137 other cell types or tissues"/>
</dbReference>
<dbReference type="ExpressionAtlas" id="Q9WUT3">
    <property type="expression patterns" value="baseline and differential"/>
</dbReference>
<dbReference type="GO" id="GO:0005737">
    <property type="term" value="C:cytoplasm"/>
    <property type="evidence" value="ECO:0000314"/>
    <property type="project" value="MGI"/>
</dbReference>
<dbReference type="GO" id="GO:0072687">
    <property type="term" value="C:meiotic spindle"/>
    <property type="evidence" value="ECO:0000314"/>
    <property type="project" value="UniProtKB"/>
</dbReference>
<dbReference type="GO" id="GO:0005654">
    <property type="term" value="C:nucleoplasm"/>
    <property type="evidence" value="ECO:0000304"/>
    <property type="project" value="Reactome"/>
</dbReference>
<dbReference type="GO" id="GO:0005634">
    <property type="term" value="C:nucleus"/>
    <property type="evidence" value="ECO:0000250"/>
    <property type="project" value="UniProtKB"/>
</dbReference>
<dbReference type="GO" id="GO:0005819">
    <property type="term" value="C:spindle"/>
    <property type="evidence" value="ECO:0000314"/>
    <property type="project" value="MGI"/>
</dbReference>
<dbReference type="GO" id="GO:0005524">
    <property type="term" value="F:ATP binding"/>
    <property type="evidence" value="ECO:0007669"/>
    <property type="project" value="UniProtKB-KW"/>
</dbReference>
<dbReference type="GO" id="GO:0000287">
    <property type="term" value="F:magnesium ion binding"/>
    <property type="evidence" value="ECO:0007669"/>
    <property type="project" value="InterPro"/>
</dbReference>
<dbReference type="GO" id="GO:0004672">
    <property type="term" value="F:protein kinase activity"/>
    <property type="evidence" value="ECO:0000314"/>
    <property type="project" value="MGI"/>
</dbReference>
<dbReference type="GO" id="GO:0106310">
    <property type="term" value="F:protein serine kinase activity"/>
    <property type="evidence" value="ECO:0007669"/>
    <property type="project" value="RHEA"/>
</dbReference>
<dbReference type="GO" id="GO:0004674">
    <property type="term" value="F:protein serine/threonine kinase activity"/>
    <property type="evidence" value="ECO:0000314"/>
    <property type="project" value="MGI"/>
</dbReference>
<dbReference type="GO" id="GO:0004712">
    <property type="term" value="F:protein serine/threonine/tyrosine kinase activity"/>
    <property type="evidence" value="ECO:0000266"/>
    <property type="project" value="MGI"/>
</dbReference>
<dbReference type="GO" id="GO:0004711">
    <property type="term" value="F:ribosomal protein S6 kinase activity"/>
    <property type="evidence" value="ECO:0000314"/>
    <property type="project" value="MGI"/>
</dbReference>
<dbReference type="GO" id="GO:0002035">
    <property type="term" value="P:brain renin-angiotensin system"/>
    <property type="evidence" value="ECO:0000314"/>
    <property type="project" value="MGI"/>
</dbReference>
<dbReference type="GO" id="GO:0010659">
    <property type="term" value="P:cardiac muscle cell apoptotic process"/>
    <property type="evidence" value="ECO:0000314"/>
    <property type="project" value="MGI"/>
</dbReference>
<dbReference type="GO" id="GO:0071322">
    <property type="term" value="P:cellular response to carbohydrate stimulus"/>
    <property type="evidence" value="ECO:0000314"/>
    <property type="project" value="MGI"/>
</dbReference>
<dbReference type="GO" id="GO:0060047">
    <property type="term" value="P:heart contraction"/>
    <property type="evidence" value="ECO:0000314"/>
    <property type="project" value="MGI"/>
</dbReference>
<dbReference type="GO" id="GO:0007507">
    <property type="term" value="P:heart development"/>
    <property type="evidence" value="ECO:0000314"/>
    <property type="project" value="MGI"/>
</dbReference>
<dbReference type="GO" id="GO:0035556">
    <property type="term" value="P:intracellular signal transduction"/>
    <property type="evidence" value="ECO:0007669"/>
    <property type="project" value="InterPro"/>
</dbReference>
<dbReference type="GO" id="GO:0045786">
    <property type="term" value="P:negative regulation of cell cycle"/>
    <property type="evidence" value="ECO:0000250"/>
    <property type="project" value="UniProtKB"/>
</dbReference>
<dbReference type="GO" id="GO:0008285">
    <property type="term" value="P:negative regulation of cell population proliferation"/>
    <property type="evidence" value="ECO:0000250"/>
    <property type="project" value="UniProtKB"/>
</dbReference>
<dbReference type="GO" id="GO:0045835">
    <property type="term" value="P:negative regulation of meiotic nuclear division"/>
    <property type="evidence" value="ECO:0000314"/>
    <property type="project" value="MGI"/>
</dbReference>
<dbReference type="GO" id="GO:0001556">
    <property type="term" value="P:oocyte maturation"/>
    <property type="evidence" value="ECO:0000314"/>
    <property type="project" value="MGI"/>
</dbReference>
<dbReference type="GO" id="GO:0043065">
    <property type="term" value="P:positive regulation of apoptotic process"/>
    <property type="evidence" value="ECO:0000250"/>
    <property type="project" value="UniProtKB"/>
</dbReference>
<dbReference type="GO" id="GO:0010628">
    <property type="term" value="P:positive regulation of gene expression"/>
    <property type="evidence" value="ECO:0000314"/>
    <property type="project" value="MGI"/>
</dbReference>
<dbReference type="GO" id="GO:0070613">
    <property type="term" value="P:regulation of protein processing"/>
    <property type="evidence" value="ECO:0000315"/>
    <property type="project" value="MGI"/>
</dbReference>
<dbReference type="CDD" id="cd14178">
    <property type="entry name" value="STKc_RSK3_C"/>
    <property type="match status" value="1"/>
</dbReference>
<dbReference type="CDD" id="cd05582">
    <property type="entry name" value="STKc_RSK_N"/>
    <property type="match status" value="1"/>
</dbReference>
<dbReference type="FunFam" id="1.10.510.10:FF:000010">
    <property type="entry name" value="Ribosomal protein S6 kinase"/>
    <property type="match status" value="1"/>
</dbReference>
<dbReference type="FunFam" id="1.10.510.10:FF:000041">
    <property type="entry name" value="Ribosomal protein S6 kinase"/>
    <property type="match status" value="1"/>
</dbReference>
<dbReference type="FunFam" id="3.30.200.20:FF:000013">
    <property type="entry name" value="Ribosomal protein S6 kinase"/>
    <property type="match status" value="1"/>
</dbReference>
<dbReference type="FunFam" id="3.30.200.20:FF:000121">
    <property type="entry name" value="Ribosomal protein S6 kinase"/>
    <property type="match status" value="1"/>
</dbReference>
<dbReference type="Gene3D" id="3.30.200.20">
    <property type="entry name" value="Phosphorylase Kinase, domain 1"/>
    <property type="match status" value="2"/>
</dbReference>
<dbReference type="Gene3D" id="1.10.510.10">
    <property type="entry name" value="Transferase(Phosphotransferase) domain 1"/>
    <property type="match status" value="2"/>
</dbReference>
<dbReference type="InterPro" id="IPR000961">
    <property type="entry name" value="AGC-kinase_C"/>
</dbReference>
<dbReference type="InterPro" id="IPR011009">
    <property type="entry name" value="Kinase-like_dom_sf"/>
</dbReference>
<dbReference type="InterPro" id="IPR017892">
    <property type="entry name" value="Pkinase_C"/>
</dbReference>
<dbReference type="InterPro" id="IPR000719">
    <property type="entry name" value="Prot_kinase_dom"/>
</dbReference>
<dbReference type="InterPro" id="IPR017441">
    <property type="entry name" value="Protein_kinase_ATP_BS"/>
</dbReference>
<dbReference type="InterPro" id="IPR016239">
    <property type="entry name" value="Ribosomal_S6_kinase_II"/>
</dbReference>
<dbReference type="InterPro" id="IPR042766">
    <property type="entry name" value="RSK3_STKc"/>
</dbReference>
<dbReference type="InterPro" id="IPR041906">
    <property type="entry name" value="RSK_N"/>
</dbReference>
<dbReference type="InterPro" id="IPR008271">
    <property type="entry name" value="Ser/Thr_kinase_AS"/>
</dbReference>
<dbReference type="PANTHER" id="PTHR24351">
    <property type="entry name" value="RIBOSOMAL PROTEIN S6 KINASE"/>
    <property type="match status" value="1"/>
</dbReference>
<dbReference type="Pfam" id="PF00069">
    <property type="entry name" value="Pkinase"/>
    <property type="match status" value="2"/>
</dbReference>
<dbReference type="Pfam" id="PF00433">
    <property type="entry name" value="Pkinase_C"/>
    <property type="match status" value="1"/>
</dbReference>
<dbReference type="PIRSF" id="PIRSF000606">
    <property type="entry name" value="Ribsml_S6_kin_2"/>
    <property type="match status" value="1"/>
</dbReference>
<dbReference type="SMART" id="SM00133">
    <property type="entry name" value="S_TK_X"/>
    <property type="match status" value="1"/>
</dbReference>
<dbReference type="SMART" id="SM00220">
    <property type="entry name" value="S_TKc"/>
    <property type="match status" value="2"/>
</dbReference>
<dbReference type="SUPFAM" id="SSF56112">
    <property type="entry name" value="Protein kinase-like (PK-like)"/>
    <property type="match status" value="2"/>
</dbReference>
<dbReference type="PROSITE" id="PS51285">
    <property type="entry name" value="AGC_KINASE_CTER"/>
    <property type="match status" value="1"/>
</dbReference>
<dbReference type="PROSITE" id="PS00107">
    <property type="entry name" value="PROTEIN_KINASE_ATP"/>
    <property type="match status" value="2"/>
</dbReference>
<dbReference type="PROSITE" id="PS50011">
    <property type="entry name" value="PROTEIN_KINASE_DOM"/>
    <property type="match status" value="2"/>
</dbReference>
<dbReference type="PROSITE" id="PS00108">
    <property type="entry name" value="PROTEIN_KINASE_ST"/>
    <property type="match status" value="2"/>
</dbReference>
<evidence type="ECO:0000250" key="1"/>
<evidence type="ECO:0000250" key="2">
    <source>
        <dbReference type="UniProtKB" id="Q15349"/>
    </source>
</evidence>
<evidence type="ECO:0000255" key="3">
    <source>
        <dbReference type="PROSITE-ProRule" id="PRU00159"/>
    </source>
</evidence>
<evidence type="ECO:0000255" key="4">
    <source>
        <dbReference type="PROSITE-ProRule" id="PRU00618"/>
    </source>
</evidence>
<evidence type="ECO:0000269" key="5">
    <source>
    </source>
</evidence>
<evidence type="ECO:0000305" key="6"/>
<evidence type="ECO:0007744" key="7">
    <source>
    </source>
</evidence>
<evidence type="ECO:0007744" key="8">
    <source>
    </source>
</evidence>
<feature type="chain" id="PRO_0000086202" description="Ribosomal protein S6 kinase alpha-2">
    <location>
        <begin position="1"/>
        <end position="733"/>
    </location>
</feature>
<feature type="domain" description="Protein kinase 1" evidence="3">
    <location>
        <begin position="59"/>
        <end position="318"/>
    </location>
</feature>
<feature type="domain" description="AGC-kinase C-terminal" evidence="4">
    <location>
        <begin position="319"/>
        <end position="388"/>
    </location>
</feature>
<feature type="domain" description="Protein kinase 2" evidence="3">
    <location>
        <begin position="415"/>
        <end position="672"/>
    </location>
</feature>
<feature type="active site" description="Proton acceptor" evidence="1">
    <location>
        <position position="184"/>
    </location>
</feature>
<feature type="active site" description="Proton acceptor" evidence="1">
    <location>
        <position position="532"/>
    </location>
</feature>
<feature type="binding site" evidence="3">
    <location>
        <begin position="65"/>
        <end position="73"/>
    </location>
    <ligand>
        <name>ATP</name>
        <dbReference type="ChEBI" id="CHEBI:30616"/>
    </ligand>
</feature>
<feature type="binding site" evidence="3">
    <location>
        <position position="91"/>
    </location>
    <ligand>
        <name>ATP</name>
        <dbReference type="ChEBI" id="CHEBI:30616"/>
    </ligand>
</feature>
<feature type="binding site" evidence="3">
    <location>
        <begin position="421"/>
        <end position="429"/>
    </location>
    <ligand>
        <name>ATP</name>
        <dbReference type="ChEBI" id="CHEBI:30616"/>
    </ligand>
</feature>
<feature type="binding site" evidence="3">
    <location>
        <position position="444"/>
    </location>
    <ligand>
        <name>ATP</name>
        <dbReference type="ChEBI" id="CHEBI:30616"/>
    </ligand>
</feature>
<feature type="modified residue" description="Phosphoserine; by PDPK1" evidence="2">
    <location>
        <position position="218"/>
    </location>
</feature>
<feature type="modified residue" description="Phosphoserine" evidence="7 8">
    <location>
        <position position="377"/>
    </location>
</feature>
<feature type="sequence conflict" description="In Ref. 2; BAB31901." evidence="6" ref="2">
    <original>K</original>
    <variation>E</variation>
    <location>
        <position position="72"/>
    </location>
</feature>
<proteinExistence type="evidence at protein level"/>
<gene>
    <name type="primary">Rps6ka2</name>
    <name type="synonym">Mapkapk1c</name>
    <name type="synonym">Rsk3</name>
</gene>